<name>Y1390_STRR6</name>
<comment type="similarity">
    <text evidence="2">Belongs to the UPF0213 family.</text>
</comment>
<reference key="1">
    <citation type="journal article" date="2001" name="J. Bacteriol.">
        <title>Genome of the bacterium Streptococcus pneumoniae strain R6.</title>
        <authorList>
            <person name="Hoskins J."/>
            <person name="Alborn W.E. Jr."/>
            <person name="Arnold J."/>
            <person name="Blaszczak L.C."/>
            <person name="Burgett S."/>
            <person name="DeHoff B.S."/>
            <person name="Estrem S.T."/>
            <person name="Fritz L."/>
            <person name="Fu D.-J."/>
            <person name="Fuller W."/>
            <person name="Geringer C."/>
            <person name="Gilmour R."/>
            <person name="Glass J.S."/>
            <person name="Khoja H."/>
            <person name="Kraft A.R."/>
            <person name="Lagace R.E."/>
            <person name="LeBlanc D.J."/>
            <person name="Lee L.N."/>
            <person name="Lefkowitz E.J."/>
            <person name="Lu J."/>
            <person name="Matsushima P."/>
            <person name="McAhren S.M."/>
            <person name="McHenney M."/>
            <person name="McLeaster K."/>
            <person name="Mundy C.W."/>
            <person name="Nicas T.I."/>
            <person name="Norris F.H."/>
            <person name="O'Gara M."/>
            <person name="Peery R.B."/>
            <person name="Robertson G.T."/>
            <person name="Rockey P."/>
            <person name="Sun P.-M."/>
            <person name="Winkler M.E."/>
            <person name="Yang Y."/>
            <person name="Young-Bellido M."/>
            <person name="Zhao G."/>
            <person name="Zook C.A."/>
            <person name="Baltz R.H."/>
            <person name="Jaskunas S.R."/>
            <person name="Rosteck P.R. Jr."/>
            <person name="Skatrud P.L."/>
            <person name="Glass J.I."/>
        </authorList>
    </citation>
    <scope>NUCLEOTIDE SEQUENCE [LARGE SCALE GENOMIC DNA]</scope>
    <source>
        <strain>ATCC BAA-255 / R6</strain>
    </source>
</reference>
<organism>
    <name type="scientific">Streptococcus pneumoniae (strain ATCC BAA-255 / R6)</name>
    <dbReference type="NCBI Taxonomy" id="171101"/>
    <lineage>
        <taxon>Bacteria</taxon>
        <taxon>Bacillati</taxon>
        <taxon>Bacillota</taxon>
        <taxon>Bacilli</taxon>
        <taxon>Lactobacillales</taxon>
        <taxon>Streptococcaceae</taxon>
        <taxon>Streptococcus</taxon>
    </lineage>
</organism>
<keyword id="KW-1185">Reference proteome</keyword>
<dbReference type="EMBL" id="AE007317">
    <property type="protein sequence ID" value="AAL00194.1"/>
    <property type="molecule type" value="Genomic_DNA"/>
</dbReference>
<dbReference type="PIR" id="E98045">
    <property type="entry name" value="E98045"/>
</dbReference>
<dbReference type="RefSeq" id="NP_358983.1">
    <property type="nucleotide sequence ID" value="NC_003098.1"/>
</dbReference>
<dbReference type="RefSeq" id="WP_000349600.1">
    <property type="nucleotide sequence ID" value="NC_003098.1"/>
</dbReference>
<dbReference type="SMR" id="Q8DP31"/>
<dbReference type="STRING" id="171101.spr1390"/>
<dbReference type="KEGG" id="spr:spr1390"/>
<dbReference type="PATRIC" id="fig|171101.6.peg.1505"/>
<dbReference type="eggNOG" id="COG2827">
    <property type="taxonomic scope" value="Bacteria"/>
</dbReference>
<dbReference type="HOGENOM" id="CLU_135650_0_3_9"/>
<dbReference type="Proteomes" id="UP000000586">
    <property type="component" value="Chromosome"/>
</dbReference>
<dbReference type="CDD" id="cd10456">
    <property type="entry name" value="GIY-YIG_UPF0213"/>
    <property type="match status" value="1"/>
</dbReference>
<dbReference type="Gene3D" id="3.40.1440.10">
    <property type="entry name" value="GIY-YIG endonuclease"/>
    <property type="match status" value="1"/>
</dbReference>
<dbReference type="InterPro" id="IPR000305">
    <property type="entry name" value="GIY-YIG_endonuc"/>
</dbReference>
<dbReference type="InterPro" id="IPR035901">
    <property type="entry name" value="GIY-YIG_endonuc_sf"/>
</dbReference>
<dbReference type="InterPro" id="IPR050190">
    <property type="entry name" value="UPF0213_domain"/>
</dbReference>
<dbReference type="PANTHER" id="PTHR34477">
    <property type="entry name" value="UPF0213 PROTEIN YHBQ"/>
    <property type="match status" value="1"/>
</dbReference>
<dbReference type="PANTHER" id="PTHR34477:SF1">
    <property type="entry name" value="UPF0213 PROTEIN YHBQ"/>
    <property type="match status" value="1"/>
</dbReference>
<dbReference type="Pfam" id="PF01541">
    <property type="entry name" value="GIY-YIG"/>
    <property type="match status" value="1"/>
</dbReference>
<dbReference type="SUPFAM" id="SSF82771">
    <property type="entry name" value="GIY-YIG endonuclease"/>
    <property type="match status" value="1"/>
</dbReference>
<dbReference type="PROSITE" id="PS50164">
    <property type="entry name" value="GIY_YIG"/>
    <property type="match status" value="1"/>
</dbReference>
<proteinExistence type="inferred from homology"/>
<feature type="chain" id="PRO_0000161393" description="UPF0213 protein spr1390">
    <location>
        <begin position="1"/>
        <end position="99"/>
    </location>
</feature>
<feature type="domain" description="GIY-YIG" evidence="1">
    <location>
        <begin position="3"/>
        <end position="78"/>
    </location>
</feature>
<accession>Q8DP31</accession>
<protein>
    <recommendedName>
        <fullName>UPF0213 protein spr1390</fullName>
    </recommendedName>
</protein>
<gene>
    <name type="ordered locus">spr1390</name>
</gene>
<evidence type="ECO:0000255" key="1">
    <source>
        <dbReference type="PROSITE-ProRule" id="PRU00977"/>
    </source>
</evidence>
<evidence type="ECO:0000305" key="2"/>
<sequence>MDHKAYMYVLECRDGSYYIGYTTDMRRRLAIHNSGKGAKYTRARLPVKLIYAQGFASKEEAMSAEALFKRKKRPQKEEFLSENQDRNLLSYFEESWGVL</sequence>